<evidence type="ECO:0000250" key="1"/>
<evidence type="ECO:0000250" key="2">
    <source>
        <dbReference type="UniProtKB" id="P46061"/>
    </source>
</evidence>
<evidence type="ECO:0000256" key="3">
    <source>
        <dbReference type="SAM" id="MobiDB-lite"/>
    </source>
</evidence>
<evidence type="ECO:0000269" key="4">
    <source>
    </source>
</evidence>
<evidence type="ECO:0000269" key="5">
    <source>
    </source>
</evidence>
<evidence type="ECO:0000269" key="6">
    <source>
    </source>
</evidence>
<evidence type="ECO:0000269" key="7">
    <source>
    </source>
</evidence>
<evidence type="ECO:0000269" key="8">
    <source>
    </source>
</evidence>
<evidence type="ECO:0000269" key="9">
    <source>
    </source>
</evidence>
<evidence type="ECO:0000269" key="10">
    <source>
    </source>
</evidence>
<evidence type="ECO:0000269" key="11">
    <source>
    </source>
</evidence>
<evidence type="ECO:0000269" key="12">
    <source>
    </source>
</evidence>
<evidence type="ECO:0000269" key="13">
    <source>
    </source>
</evidence>
<evidence type="ECO:0000269" key="14">
    <source>
    </source>
</evidence>
<evidence type="ECO:0000269" key="15">
    <source>
    </source>
</evidence>
<evidence type="ECO:0000269" key="16">
    <source>
    </source>
</evidence>
<evidence type="ECO:0000269" key="17">
    <source>
    </source>
</evidence>
<evidence type="ECO:0000305" key="18"/>
<evidence type="ECO:0000305" key="19">
    <source>
    </source>
</evidence>
<evidence type="ECO:0000305" key="20">
    <source>
    </source>
</evidence>
<evidence type="ECO:0007744" key="21">
    <source>
        <dbReference type="PDB" id="1Z5S"/>
    </source>
</evidence>
<evidence type="ECO:0007744" key="22">
    <source>
        <dbReference type="PDB" id="2IY0"/>
    </source>
</evidence>
<evidence type="ECO:0007744" key="23">
    <source>
        <dbReference type="PDB" id="3UIN"/>
    </source>
</evidence>
<evidence type="ECO:0007744" key="24">
    <source>
        <dbReference type="PDB" id="3UIO"/>
    </source>
</evidence>
<evidence type="ECO:0007744" key="25">
    <source>
        <dbReference type="PDB" id="3UIP"/>
    </source>
</evidence>
<evidence type="ECO:0007744" key="26">
    <source>
    </source>
</evidence>
<evidence type="ECO:0007744" key="27">
    <source>
    </source>
</evidence>
<evidence type="ECO:0007744" key="28">
    <source>
    </source>
</evidence>
<evidence type="ECO:0007744" key="29">
    <source>
    </source>
</evidence>
<evidence type="ECO:0007744" key="30">
    <source>
    </source>
</evidence>
<evidence type="ECO:0007744" key="31">
    <source>
    </source>
</evidence>
<evidence type="ECO:0007744" key="32">
    <source>
    </source>
</evidence>
<evidence type="ECO:0007744" key="33">
    <source>
    </source>
</evidence>
<evidence type="ECO:0007744" key="34">
    <source>
    </source>
</evidence>
<evidence type="ECO:0007744" key="35">
    <source>
    </source>
</evidence>
<evidence type="ECO:0007744" key="36">
    <source>
    </source>
</evidence>
<evidence type="ECO:0007744" key="37">
    <source>
    </source>
</evidence>
<evidence type="ECO:0007829" key="38">
    <source>
        <dbReference type="PDB" id="1Z5S"/>
    </source>
</evidence>
<evidence type="ECO:0007829" key="39">
    <source>
        <dbReference type="PDB" id="2GRR"/>
    </source>
</evidence>
<evidence type="ECO:0007829" key="40">
    <source>
        <dbReference type="PDB" id="2IO2"/>
    </source>
</evidence>
<organism>
    <name type="scientific">Homo sapiens</name>
    <name type="common">Human</name>
    <dbReference type="NCBI Taxonomy" id="9606"/>
    <lineage>
        <taxon>Eukaryota</taxon>
        <taxon>Metazoa</taxon>
        <taxon>Chordata</taxon>
        <taxon>Craniata</taxon>
        <taxon>Vertebrata</taxon>
        <taxon>Euteleostomi</taxon>
        <taxon>Mammalia</taxon>
        <taxon>Eutheria</taxon>
        <taxon>Euarchontoglires</taxon>
        <taxon>Primates</taxon>
        <taxon>Haplorrhini</taxon>
        <taxon>Catarrhini</taxon>
        <taxon>Hominidae</taxon>
        <taxon>Homo</taxon>
    </lineage>
</organism>
<keyword id="KW-0002">3D-structure</keyword>
<keyword id="KW-0007">Acetylation</keyword>
<keyword id="KW-0137">Centromere</keyword>
<keyword id="KW-0158">Chromosome</keyword>
<keyword id="KW-0963">Cytoplasm</keyword>
<keyword id="KW-0206">Cytoskeleton</keyword>
<keyword id="KW-0903">Direct protein sequencing</keyword>
<keyword id="KW-0343">GTPase activation</keyword>
<keyword id="KW-1017">Isopeptide bond</keyword>
<keyword id="KW-0995">Kinetochore</keyword>
<keyword id="KW-0433">Leucine-rich repeat</keyword>
<keyword id="KW-0539">Nucleus</keyword>
<keyword id="KW-0597">Phosphoprotein</keyword>
<keyword id="KW-1267">Proteomics identification</keyword>
<keyword id="KW-1185">Reference proteome</keyword>
<keyword id="KW-0677">Repeat</keyword>
<keyword id="KW-0832">Ubl conjugation</keyword>
<accession>P46060</accession>
<accession>Q96JJ2</accession>
<name>RAGP1_HUMAN</name>
<sequence length="587" mass="63542">MASEDIAKLAETLAKTQVAGGQLSFKGKSLKLNTAEDAKDVIKEIEDFDSLEALRLEGNTVGVEAARVIAKALEKKSELKRCHWSDMFTGRLRTEIPPALISLGEGLITAGAQLVELDLSDNAFGPDGVQGFEALLKSSACFTLQELKLNNCGMGIGGGKILAAALTECHRKSSAQGKPLALKVFVAGRNRLENDGATALAEAFRVIGTLEEVHMPQNGINHPGITALAQAFAVNPLLRVINLNDNTFTEKGAVAMAETLKTLRQVEVINFGDCLVRSKGAVAIADAIRGGLPKLKELNLSFCEIKRDAALAVAEAMADKAELEKLDLNGNTLGEEGCEQLQEVLEGFNMAKVLASLSDDEDEEEEEEGEEEEEEAEEEEEEDEEEEEEEEEEEEEEPQQRGQGEKSATPSRKILDPNTGEPAPVLSSPPPADVSTFLAFPSPEKLLRLGPKSSVLIAQQTDTSDPEKVVSAFLKVSSVFKDEATVRMAVQDAVDALMQKAFNSSSFNSNTFLTRLLVHMGLLKSEDKVKAIANLYGPLMALNHMVQQDYFPKALAPLLLAFVTKPNSALESCSFARHSLLQTLYKV</sequence>
<comment type="function">
    <text evidence="8 13 15 16">GTPase activator for RAN (PubMed:16428860, PubMed:8146159, PubMed:8896452). Converts cytoplasmic GTP-bound RAN to GDP-bound RAN, which is essential for RAN-mediated nuclear import and export (PubMed:27160050, PubMed:8896452). Mediates dissociation of cargo from nuclear export complexes containing XPO1, RAN and RANBP2 after nuclear export (PubMed:27160050).</text>
</comment>
<comment type="subunit">
    <text evidence="5 6 7 8 9 10 12 13 14 15 16">Homodimer (PubMed:8146159). Interacts with RAN (PubMed:16428860, PubMed:7891706, PubMed:8896452). Forms a complex with RANBP2/NUP358, NXF1 and NXT1 (PubMed:14729961). Forms a tight complex in association with RANBP2/NUP358 and UBE2I/UBC9, the ubiquitin-conjugating enzyme E2 (PubMed:15037602, PubMed:15931224, PubMed:22194619, PubMed:27160050). Interacts with UBE2I; the interaction conjugates SUMO1 to RANGAP1, and subsequently stabilizes interactions of sumoylated RANGAP1 with RANBP2/NUP358 (PubMed:15037602, PubMed:15931224, PubMed:27160050). The complex composed of RANBP2, SUMO1, RANGAP1 and UBE2I associates with nuclear pore complexes (PubMed:15037602, PubMed:15931224). Identified in a complex composed of RAN, RANBP2, sumoylated RANGAP1, UBE2I and XPO1 (PubMed:27160050). Identified in a complex composed of RAN, RANGAP1 and RANBP1 (PubMed:16428860). Interacts with TRAF6 (PubMed:18093978). Interacts with SUMO1 and SENP1 (PubMed:17099698). Interacts (when sumoylated) with MYCBP2; interaction inhibits MYCBP2 E3 ubiquitin-protein ligase activity and promotes MYCBP2 translocation to the nucleus (PubMed:26304119).</text>
</comment>
<comment type="interaction">
    <interactant intactId="EBI-396091">
        <id>P46060</id>
    </interactant>
    <interactant intactId="EBI-466029">
        <id>P42858</id>
        <label>HTT</label>
    </interactant>
    <organismsDiffer>false</organismsDiffer>
    <experiments>10</experiments>
</comment>
<comment type="interaction">
    <interactant intactId="EBI-396091">
        <id>P46060</id>
    </interactant>
    <interactant intactId="EBI-973138">
        <id>P49792</id>
        <label>RANBP2</label>
    </interactant>
    <organismsDiffer>false</organismsDiffer>
    <experiments>5</experiments>
</comment>
<comment type="interaction">
    <interactant intactId="EBI-396091">
        <id>P46060</id>
    </interactant>
    <interactant intactId="EBI-80140">
        <id>P63165</id>
        <label>SUMO1</label>
    </interactant>
    <organismsDiffer>false</organismsDiffer>
    <experiments>14</experiments>
</comment>
<comment type="interaction">
    <interactant intactId="EBI-396091">
        <id>P46060</id>
    </interactant>
    <interactant intactId="EBI-80168">
        <id>P63279</id>
        <label>UBE2I</label>
    </interactant>
    <organismsDiffer>false</organismsDiffer>
    <experiments>14</experiments>
</comment>
<comment type="subcellular location">
    <subcellularLocation>
        <location evidence="6 20">Cytoplasm</location>
    </subcellularLocation>
    <subcellularLocation>
        <location evidence="15">Nucleus</location>
        <location evidence="15">Nucleoplasm</location>
    </subcellularLocation>
    <subcellularLocation>
        <location evidence="4 6">Nucleus envelope</location>
    </subcellularLocation>
    <subcellularLocation>
        <location evidence="4">Chromosome</location>
        <location evidence="4">Centromere</location>
        <location evidence="4">Kinetochore</location>
    </subcellularLocation>
    <subcellularLocation>
        <location evidence="4 6">Cytoplasm</location>
        <location evidence="4 6">Cytoskeleton</location>
        <location evidence="4 6">Spindle</location>
    </subcellularLocation>
    <text evidence="4 6">Cytoplasmic during interphase. Detected at the nuclear envelope during interphase (PubMed:11854305, PubMed:15037602). Targeted to the nuclear pores after sumoylation (PubMed:11854305). During mitosis, associates with mitotic spindles, but is essentially not detected at the spindle poles (PubMed:11854305, PubMed:15037602). Association with kinetochores appears soon after nuclear envelope breakdown and persists until late anaphase (PubMed:11854305). Mitotic location also requires sumoylation (PubMed:11854305).</text>
</comment>
<comment type="tissue specificity">
    <text evidence="17">Highly expressed in brain, thymus and testis.</text>
</comment>
<comment type="PTM">
    <text evidence="6">Phosphorylation occurs before nuclear envelope breakdown and continues throughout mitosis. Phosphorylated by the M-phase kinase cyclin B/Cdk1, in vitro. Differential timimg of dephosphorylation occurs during phases of mitosis. The phosphorylated form remains associated with RANBP2/NUP358 and the SUMO E2-conjugating enzyme, UBE2I, on nuclear pore complex (NPC) diassembly and during mitosis.</text>
</comment>
<comment type="PTM">
    <text evidence="2 4 6 8 11 12 19">Sumoylated (PubMed:11854305, PubMed:15037602, PubMed:26304119, PubMed:27160050). Sumoylation is necessary for targeting to the nuclear envelope (NE), and for association with mitotic spindles and kinetochores during mitosis (PubMed:11854305). Also required for interaction with RANBP2 and is mediated by UBE2I (PubMed:27160050). Desumoylated by HINT1 (By similarity).</text>
</comment>
<comment type="similarity">
    <text evidence="18">Belongs to the RNA1 family.</text>
</comment>
<comment type="sequence caution" evidence="18">
    <conflict type="erroneous initiation">
        <sequence resource="EMBL-CDS" id="BAB47464"/>
    </conflict>
</comment>
<dbReference type="EMBL" id="X82260">
    <property type="protein sequence ID" value="CAA57714.1"/>
    <property type="molecule type" value="mRNA"/>
</dbReference>
<dbReference type="EMBL" id="AB058738">
    <property type="protein sequence ID" value="BAB47464.1"/>
    <property type="status" value="ALT_INIT"/>
    <property type="molecule type" value="mRNA"/>
</dbReference>
<dbReference type="EMBL" id="CR456557">
    <property type="protein sequence ID" value="CAG30443.1"/>
    <property type="molecule type" value="mRNA"/>
</dbReference>
<dbReference type="EMBL" id="AL035681">
    <property type="status" value="NOT_ANNOTATED_CDS"/>
    <property type="molecule type" value="Genomic_DNA"/>
</dbReference>
<dbReference type="EMBL" id="BC014044">
    <property type="protein sequence ID" value="AAH14044.1"/>
    <property type="molecule type" value="mRNA"/>
</dbReference>
<dbReference type="EMBL" id="BC041396">
    <property type="protein sequence ID" value="AAH41396.1"/>
    <property type="molecule type" value="mRNA"/>
</dbReference>
<dbReference type="CCDS" id="CCDS14012.1"/>
<dbReference type="PIR" id="JC5300">
    <property type="entry name" value="JC5300"/>
</dbReference>
<dbReference type="RefSeq" id="NP_001265580.1">
    <property type="nucleotide sequence ID" value="NM_001278651.2"/>
</dbReference>
<dbReference type="RefSeq" id="NP_001304859.1">
    <property type="nucleotide sequence ID" value="NM_001317930.2"/>
</dbReference>
<dbReference type="RefSeq" id="NP_002874.1">
    <property type="nucleotide sequence ID" value="NM_002883.4"/>
</dbReference>
<dbReference type="RefSeq" id="XP_006724352.1">
    <property type="nucleotide sequence ID" value="XM_006724289.5"/>
</dbReference>
<dbReference type="RefSeq" id="XP_011528596.1">
    <property type="nucleotide sequence ID" value="XM_011530294.2"/>
</dbReference>
<dbReference type="RefSeq" id="XP_011528597.1">
    <property type="nucleotide sequence ID" value="XM_011530295.2"/>
</dbReference>
<dbReference type="RefSeq" id="XP_016884382.1">
    <property type="nucleotide sequence ID" value="XM_017028893.3"/>
</dbReference>
<dbReference type="RefSeq" id="XP_016884383.1">
    <property type="nucleotide sequence ID" value="XM_017028894.1"/>
</dbReference>
<dbReference type="RefSeq" id="XP_016884384.1">
    <property type="nucleotide sequence ID" value="XM_017028895.3"/>
</dbReference>
<dbReference type="RefSeq" id="XP_016884385.1">
    <property type="nucleotide sequence ID" value="XM_017028896.1"/>
</dbReference>
<dbReference type="RefSeq" id="XP_016884386.1">
    <property type="nucleotide sequence ID" value="XM_017028897.2"/>
</dbReference>
<dbReference type="RefSeq" id="XP_047297408.1">
    <property type="nucleotide sequence ID" value="XM_047441452.1"/>
</dbReference>
<dbReference type="RefSeq" id="XP_054181786.1">
    <property type="nucleotide sequence ID" value="XM_054325811.1"/>
</dbReference>
<dbReference type="RefSeq" id="XP_054181787.1">
    <property type="nucleotide sequence ID" value="XM_054325812.1"/>
</dbReference>
<dbReference type="RefSeq" id="XP_054181788.1">
    <property type="nucleotide sequence ID" value="XM_054325813.1"/>
</dbReference>
<dbReference type="RefSeq" id="XP_054181789.1">
    <property type="nucleotide sequence ID" value="XM_054325814.1"/>
</dbReference>
<dbReference type="RefSeq" id="XP_054181790.1">
    <property type="nucleotide sequence ID" value="XM_054325815.1"/>
</dbReference>
<dbReference type="PDB" id="1Z5S">
    <property type="method" value="X-ray"/>
    <property type="resolution" value="3.01 A"/>
    <property type="chains" value="C=418-587"/>
</dbReference>
<dbReference type="PDB" id="2GRN">
    <property type="method" value="X-ray"/>
    <property type="resolution" value="1.80 A"/>
    <property type="chains" value="B=419-587"/>
</dbReference>
<dbReference type="PDB" id="2GRO">
    <property type="method" value="X-ray"/>
    <property type="resolution" value="1.70 A"/>
    <property type="chains" value="B=419-587"/>
</dbReference>
<dbReference type="PDB" id="2GRP">
    <property type="method" value="X-ray"/>
    <property type="resolution" value="2.05 A"/>
    <property type="chains" value="B=419-587"/>
</dbReference>
<dbReference type="PDB" id="2GRQ">
    <property type="method" value="X-ray"/>
    <property type="resolution" value="1.70 A"/>
    <property type="chains" value="B=419-587"/>
</dbReference>
<dbReference type="PDB" id="2GRR">
    <property type="method" value="X-ray"/>
    <property type="resolution" value="1.30 A"/>
    <property type="chains" value="B=419-587"/>
</dbReference>
<dbReference type="PDB" id="2IO2">
    <property type="method" value="X-ray"/>
    <property type="resolution" value="2.90 A"/>
    <property type="chains" value="C=418-587"/>
</dbReference>
<dbReference type="PDB" id="2IO3">
    <property type="method" value="X-ray"/>
    <property type="resolution" value="3.20 A"/>
    <property type="chains" value="C=418-587"/>
</dbReference>
<dbReference type="PDB" id="2IY0">
    <property type="method" value="X-ray"/>
    <property type="resolution" value="2.77 A"/>
    <property type="chains" value="C=432-587"/>
</dbReference>
<dbReference type="PDB" id="3UIN">
    <property type="method" value="X-ray"/>
    <property type="resolution" value="2.60 A"/>
    <property type="chains" value="C=419-587"/>
</dbReference>
<dbReference type="PDB" id="3UIO">
    <property type="method" value="X-ray"/>
    <property type="resolution" value="2.60 A"/>
    <property type="chains" value="C=419-587"/>
</dbReference>
<dbReference type="PDB" id="3UIP">
    <property type="method" value="X-ray"/>
    <property type="resolution" value="2.29 A"/>
    <property type="chains" value="C=419-587"/>
</dbReference>
<dbReference type="PDB" id="5D2M">
    <property type="method" value="X-ray"/>
    <property type="resolution" value="2.40 A"/>
    <property type="chains" value="C/F=418-587"/>
</dbReference>
<dbReference type="PDB" id="9B62">
    <property type="method" value="EM"/>
    <property type="resolution" value="2.90 A"/>
    <property type="chains" value="G=1-587"/>
</dbReference>
<dbReference type="PDBsum" id="1Z5S"/>
<dbReference type="PDBsum" id="2GRN"/>
<dbReference type="PDBsum" id="2GRO"/>
<dbReference type="PDBsum" id="2GRP"/>
<dbReference type="PDBsum" id="2GRQ"/>
<dbReference type="PDBsum" id="2GRR"/>
<dbReference type="PDBsum" id="2IO2"/>
<dbReference type="PDBsum" id="2IO3"/>
<dbReference type="PDBsum" id="2IY0"/>
<dbReference type="PDBsum" id="3UIN"/>
<dbReference type="PDBsum" id="3UIO"/>
<dbReference type="PDBsum" id="3UIP"/>
<dbReference type="PDBsum" id="5D2M"/>
<dbReference type="PDBsum" id="9B62"/>
<dbReference type="BMRB" id="P46060"/>
<dbReference type="EMDB" id="EMD-44235"/>
<dbReference type="EMDB" id="EMD-44236"/>
<dbReference type="EMDB" id="EMD-44237"/>
<dbReference type="EMDB" id="EMD-44238"/>
<dbReference type="EMDB" id="EMD-44239"/>
<dbReference type="EMDB" id="EMD-44240"/>
<dbReference type="EMDB" id="EMD-44241"/>
<dbReference type="EMDB" id="EMD-44242"/>
<dbReference type="EMDB" id="EMD-44243"/>
<dbReference type="SMR" id="P46060"/>
<dbReference type="BioGRID" id="111840">
    <property type="interactions" value="322"/>
</dbReference>
<dbReference type="ComplexPortal" id="CPX-4747">
    <property type="entry name" value="E3 ligase (RANBP2) complex"/>
</dbReference>
<dbReference type="DIP" id="DIP-29079N"/>
<dbReference type="FunCoup" id="P46060">
    <property type="interactions" value="2236"/>
</dbReference>
<dbReference type="IntAct" id="P46060">
    <property type="interactions" value="130"/>
</dbReference>
<dbReference type="MINT" id="P46060"/>
<dbReference type="STRING" id="9606.ENSP00000401470"/>
<dbReference type="TCDB" id="1.I.1.1.3">
    <property type="family name" value="the nuclear pore complex (npc) family"/>
</dbReference>
<dbReference type="GlyGen" id="P46060">
    <property type="glycosylation" value="3 sites, 1 N-linked glycan (1 site), 1 O-linked glycan (1 site)"/>
</dbReference>
<dbReference type="iPTMnet" id="P46060"/>
<dbReference type="MetOSite" id="P46060"/>
<dbReference type="PhosphoSitePlus" id="P46060"/>
<dbReference type="SwissPalm" id="P46060"/>
<dbReference type="BioMuta" id="RANGAP1"/>
<dbReference type="DMDM" id="1172922"/>
<dbReference type="jPOST" id="P46060"/>
<dbReference type="MassIVE" id="P46060"/>
<dbReference type="PaxDb" id="9606-ENSP00000401470"/>
<dbReference type="PeptideAtlas" id="P46060"/>
<dbReference type="ProteomicsDB" id="55712"/>
<dbReference type="Pumba" id="P46060"/>
<dbReference type="Antibodypedia" id="3803">
    <property type="antibodies" value="403 antibodies from 40 providers"/>
</dbReference>
<dbReference type="DNASU" id="5905"/>
<dbReference type="Ensembl" id="ENST00000356244.8">
    <property type="protein sequence ID" value="ENSP00000348577.3"/>
    <property type="gene ID" value="ENSG00000100401.21"/>
</dbReference>
<dbReference type="Ensembl" id="ENST00000405486.5">
    <property type="protein sequence ID" value="ENSP00000385866.1"/>
    <property type="gene ID" value="ENSG00000100401.21"/>
</dbReference>
<dbReference type="Ensembl" id="ENST00000455915.6">
    <property type="protein sequence ID" value="ENSP00000401470.2"/>
    <property type="gene ID" value="ENSG00000100401.21"/>
</dbReference>
<dbReference type="Ensembl" id="ENST00000705116.1">
    <property type="protein sequence ID" value="ENSP00000516069.1"/>
    <property type="gene ID" value="ENSG00000100401.21"/>
</dbReference>
<dbReference type="GeneID" id="5905"/>
<dbReference type="KEGG" id="hsa:5905"/>
<dbReference type="MANE-Select" id="ENST00000356244.8">
    <property type="protein sequence ID" value="ENSP00000348577.3"/>
    <property type="RefSeq nucleotide sequence ID" value="NM_002883.4"/>
    <property type="RefSeq protein sequence ID" value="NP_002874.1"/>
</dbReference>
<dbReference type="UCSC" id="uc003azs.5">
    <property type="organism name" value="human"/>
</dbReference>
<dbReference type="AGR" id="HGNC:9854"/>
<dbReference type="CTD" id="5905"/>
<dbReference type="DisGeNET" id="5905"/>
<dbReference type="GeneCards" id="RANGAP1"/>
<dbReference type="HGNC" id="HGNC:9854">
    <property type="gene designation" value="RANGAP1"/>
</dbReference>
<dbReference type="HPA" id="ENSG00000100401">
    <property type="expression patterns" value="Low tissue specificity"/>
</dbReference>
<dbReference type="MalaCards" id="RANGAP1"/>
<dbReference type="MIM" id="602362">
    <property type="type" value="gene"/>
</dbReference>
<dbReference type="neXtProt" id="NX_P46060"/>
<dbReference type="OpenTargets" id="ENSG00000100401"/>
<dbReference type="PharmGKB" id="PA34216"/>
<dbReference type="VEuPathDB" id="HostDB:ENSG00000100401"/>
<dbReference type="eggNOG" id="KOG1909">
    <property type="taxonomic scope" value="Eukaryota"/>
</dbReference>
<dbReference type="GeneTree" id="ENSGT00440000039203"/>
<dbReference type="HOGENOM" id="CLU_028747_2_0_1"/>
<dbReference type="InParanoid" id="P46060"/>
<dbReference type="OMA" id="NGSMEAW"/>
<dbReference type="OrthoDB" id="184583at2759"/>
<dbReference type="PAN-GO" id="P46060">
    <property type="GO annotations" value="7 GO annotations based on evolutionary models"/>
</dbReference>
<dbReference type="PhylomeDB" id="P46060"/>
<dbReference type="TreeFam" id="TF318283"/>
<dbReference type="PathwayCommons" id="P46060"/>
<dbReference type="Reactome" id="R-HSA-141444">
    <property type="pathway name" value="Amplification of signal from unattached kinetochores via a MAD2 inhibitory signal"/>
</dbReference>
<dbReference type="Reactome" id="R-HSA-165054">
    <property type="pathway name" value="Rev-mediated nuclear export of HIV RNA"/>
</dbReference>
<dbReference type="Reactome" id="R-HSA-2467813">
    <property type="pathway name" value="Separation of Sister Chromatids"/>
</dbReference>
<dbReference type="Reactome" id="R-HSA-2500257">
    <property type="pathway name" value="Resolution of Sister Chromatid Cohesion"/>
</dbReference>
<dbReference type="Reactome" id="R-HSA-4615885">
    <property type="pathway name" value="SUMOylation of DNA replication proteins"/>
</dbReference>
<dbReference type="Reactome" id="R-HSA-5663220">
    <property type="pathway name" value="RHO GTPases Activate Formins"/>
</dbReference>
<dbReference type="Reactome" id="R-HSA-68877">
    <property type="pathway name" value="Mitotic Prometaphase"/>
</dbReference>
<dbReference type="Reactome" id="R-HSA-9615933">
    <property type="pathway name" value="Postmitotic nuclear pore complex (NPC) reformation"/>
</dbReference>
<dbReference type="Reactome" id="R-HSA-9648025">
    <property type="pathway name" value="EML4 and NUDC in mitotic spindle formation"/>
</dbReference>
<dbReference type="Reactome" id="R-HSA-9793242">
    <property type="pathway name" value="SUMOylation of nuclear envelope proteins"/>
</dbReference>
<dbReference type="SignaLink" id="P46060"/>
<dbReference type="SIGNOR" id="P46060"/>
<dbReference type="BioGRID-ORCS" id="5905">
    <property type="hits" value="832 hits in 1167 CRISPR screens"/>
</dbReference>
<dbReference type="CD-CODE" id="DEE660B4">
    <property type="entry name" value="Stress granule"/>
</dbReference>
<dbReference type="CD-CODE" id="FB4E32DD">
    <property type="entry name" value="Presynaptic clusters and postsynaptic densities"/>
</dbReference>
<dbReference type="ChiTaRS" id="RANGAP1">
    <property type="organism name" value="human"/>
</dbReference>
<dbReference type="EvolutionaryTrace" id="P46060"/>
<dbReference type="GeneWiki" id="RANGAP1"/>
<dbReference type="GenomeRNAi" id="5905"/>
<dbReference type="Pharos" id="P46060">
    <property type="development level" value="Tbio"/>
</dbReference>
<dbReference type="PRO" id="PR:P46060"/>
<dbReference type="Proteomes" id="UP000005640">
    <property type="component" value="Chromosome 22"/>
</dbReference>
<dbReference type="RNAct" id="P46060">
    <property type="molecule type" value="protein"/>
</dbReference>
<dbReference type="Bgee" id="ENSG00000100401">
    <property type="expression patterns" value="Expressed in left testis and 190 other cell types or tissues"/>
</dbReference>
<dbReference type="ExpressionAtlas" id="P46060">
    <property type="expression patterns" value="baseline and differential"/>
</dbReference>
<dbReference type="GO" id="GO:0016235">
    <property type="term" value="C:aggresome"/>
    <property type="evidence" value="ECO:0000314"/>
    <property type="project" value="HPA"/>
</dbReference>
<dbReference type="GO" id="GO:1904115">
    <property type="term" value="C:axon cytoplasm"/>
    <property type="evidence" value="ECO:0007669"/>
    <property type="project" value="Ensembl"/>
</dbReference>
<dbReference type="GO" id="GO:0005737">
    <property type="term" value="C:cytoplasm"/>
    <property type="evidence" value="ECO:0000304"/>
    <property type="project" value="ProtInc"/>
</dbReference>
<dbReference type="GO" id="GO:1990723">
    <property type="term" value="C:cytoplasmic periphery of the nuclear pore complex"/>
    <property type="evidence" value="ECO:0007669"/>
    <property type="project" value="Ensembl"/>
</dbReference>
<dbReference type="GO" id="GO:0005829">
    <property type="term" value="C:cytosol"/>
    <property type="evidence" value="ECO:0000314"/>
    <property type="project" value="HPA"/>
</dbReference>
<dbReference type="GO" id="GO:0030425">
    <property type="term" value="C:dendrite"/>
    <property type="evidence" value="ECO:0007669"/>
    <property type="project" value="Ensembl"/>
</dbReference>
<dbReference type="GO" id="GO:0043231">
    <property type="term" value="C:intracellular membrane-bounded organelle"/>
    <property type="evidence" value="ECO:0000314"/>
    <property type="project" value="HPA"/>
</dbReference>
<dbReference type="GO" id="GO:0000776">
    <property type="term" value="C:kinetochore"/>
    <property type="evidence" value="ECO:0007669"/>
    <property type="project" value="UniProtKB-KW"/>
</dbReference>
<dbReference type="GO" id="GO:0072686">
    <property type="term" value="C:mitotic spindle"/>
    <property type="evidence" value="ECO:0007669"/>
    <property type="project" value="Ensembl"/>
</dbReference>
<dbReference type="GO" id="GO:0005635">
    <property type="term" value="C:nuclear envelope"/>
    <property type="evidence" value="ECO:0000314"/>
    <property type="project" value="BHF-UCL"/>
</dbReference>
<dbReference type="GO" id="GO:0031965">
    <property type="term" value="C:nuclear membrane"/>
    <property type="evidence" value="ECO:0000314"/>
    <property type="project" value="HPA"/>
</dbReference>
<dbReference type="GO" id="GO:0005643">
    <property type="term" value="C:nuclear pore"/>
    <property type="evidence" value="ECO:0000304"/>
    <property type="project" value="ProtInc"/>
</dbReference>
<dbReference type="GO" id="GO:0044614">
    <property type="term" value="C:nuclear pore cytoplasmic filaments"/>
    <property type="evidence" value="ECO:0007669"/>
    <property type="project" value="Ensembl"/>
</dbReference>
<dbReference type="GO" id="GO:0005654">
    <property type="term" value="C:nucleoplasm"/>
    <property type="evidence" value="ECO:0007669"/>
    <property type="project" value="UniProtKB-SubCell"/>
</dbReference>
<dbReference type="GO" id="GO:0005634">
    <property type="term" value="C:nucleus"/>
    <property type="evidence" value="ECO:0000318"/>
    <property type="project" value="GO_Central"/>
</dbReference>
<dbReference type="GO" id="GO:0048471">
    <property type="term" value="C:perinuclear region of cytoplasm"/>
    <property type="evidence" value="ECO:0000314"/>
    <property type="project" value="FlyBase"/>
</dbReference>
<dbReference type="GO" id="GO:0106068">
    <property type="term" value="C:SUMO ligase complex"/>
    <property type="evidence" value="ECO:0000353"/>
    <property type="project" value="ComplexPortal"/>
</dbReference>
<dbReference type="GO" id="GO:0045296">
    <property type="term" value="F:cadherin binding"/>
    <property type="evidence" value="ECO:0007005"/>
    <property type="project" value="BHF-UCL"/>
</dbReference>
<dbReference type="GO" id="GO:0005096">
    <property type="term" value="F:GTPase activator activity"/>
    <property type="evidence" value="ECO:0000314"/>
    <property type="project" value="UniProtKB"/>
</dbReference>
<dbReference type="GO" id="GO:0003723">
    <property type="term" value="F:RNA binding"/>
    <property type="evidence" value="ECO:0000314"/>
    <property type="project" value="FlyBase"/>
</dbReference>
<dbReference type="GO" id="GO:0031267">
    <property type="term" value="F:small GTPase binding"/>
    <property type="evidence" value="ECO:0000353"/>
    <property type="project" value="UniProtKB"/>
</dbReference>
<dbReference type="GO" id="GO:0031625">
    <property type="term" value="F:ubiquitin protein ligase binding"/>
    <property type="evidence" value="ECO:0007669"/>
    <property type="project" value="Ensembl"/>
</dbReference>
<dbReference type="GO" id="GO:0090630">
    <property type="term" value="P:activation of GTPase activity"/>
    <property type="evidence" value="ECO:0000314"/>
    <property type="project" value="UniProtKB"/>
</dbReference>
<dbReference type="GO" id="GO:1904117">
    <property type="term" value="P:cellular response to vasopressin"/>
    <property type="evidence" value="ECO:0007669"/>
    <property type="project" value="Ensembl"/>
</dbReference>
<dbReference type="GO" id="GO:0046826">
    <property type="term" value="P:negative regulation of protein export from nucleus"/>
    <property type="evidence" value="ECO:0000314"/>
    <property type="project" value="BHF-UCL"/>
</dbReference>
<dbReference type="GO" id="GO:0051168">
    <property type="term" value="P:nuclear export"/>
    <property type="evidence" value="ECO:0000269"/>
    <property type="project" value="ComplexPortal"/>
</dbReference>
<dbReference type="GO" id="GO:0016925">
    <property type="term" value="P:protein sumoylation"/>
    <property type="evidence" value="ECO:0000314"/>
    <property type="project" value="ComplexPortal"/>
</dbReference>
<dbReference type="GO" id="GO:0048678">
    <property type="term" value="P:response to axon injury"/>
    <property type="evidence" value="ECO:0007669"/>
    <property type="project" value="Ensembl"/>
</dbReference>
<dbReference type="GO" id="GO:0007165">
    <property type="term" value="P:signal transduction"/>
    <property type="evidence" value="ECO:0000304"/>
    <property type="project" value="ProtInc"/>
</dbReference>
<dbReference type="CDD" id="cd00116">
    <property type="entry name" value="LRR_RI"/>
    <property type="match status" value="1"/>
</dbReference>
<dbReference type="FunFam" id="3.80.10.10:FF:000142">
    <property type="entry name" value="Ran GTPase activating protein 1"/>
    <property type="match status" value="1"/>
</dbReference>
<dbReference type="FunFam" id="1.25.40.200:FF:000001">
    <property type="entry name" value="Ran GTPase-activating protein 1"/>
    <property type="match status" value="1"/>
</dbReference>
<dbReference type="Gene3D" id="1.25.40.200">
    <property type="entry name" value="Ran-GTPase activating protein 1, C-terminal domain"/>
    <property type="match status" value="1"/>
</dbReference>
<dbReference type="Gene3D" id="3.80.10.10">
    <property type="entry name" value="Ribonuclease Inhibitor"/>
    <property type="match status" value="1"/>
</dbReference>
<dbReference type="InterPro" id="IPR001611">
    <property type="entry name" value="Leu-rich_rpt"/>
</dbReference>
<dbReference type="InterPro" id="IPR032675">
    <property type="entry name" value="LRR_dom_sf"/>
</dbReference>
<dbReference type="InterPro" id="IPR009109">
    <property type="entry name" value="Ran_GTPase_activating_1_C"/>
</dbReference>
<dbReference type="InterPro" id="IPR027038">
    <property type="entry name" value="RanGap"/>
</dbReference>
<dbReference type="InterPro" id="IPR036720">
    <property type="entry name" value="RanGAP1_C_sf"/>
</dbReference>
<dbReference type="PANTHER" id="PTHR24113">
    <property type="entry name" value="RAN GTPASE-ACTIVATING PROTEIN 1"/>
    <property type="match status" value="1"/>
</dbReference>
<dbReference type="PANTHER" id="PTHR24113:SF12">
    <property type="entry name" value="RAN GTPASE-ACTIVATING PROTEIN 1"/>
    <property type="match status" value="1"/>
</dbReference>
<dbReference type="Pfam" id="PF13516">
    <property type="entry name" value="LRR_6"/>
    <property type="match status" value="4"/>
</dbReference>
<dbReference type="Pfam" id="PF07834">
    <property type="entry name" value="RanGAP1_C"/>
    <property type="match status" value="1"/>
</dbReference>
<dbReference type="SMART" id="SM00368">
    <property type="entry name" value="LRR_RI"/>
    <property type="match status" value="9"/>
</dbReference>
<dbReference type="SUPFAM" id="SSF69099">
    <property type="entry name" value="Ran-GTPase activating protein 1 (RanGAP1), C-terminal domain"/>
    <property type="match status" value="1"/>
</dbReference>
<dbReference type="SUPFAM" id="SSF52047">
    <property type="entry name" value="RNI-like"/>
    <property type="match status" value="1"/>
</dbReference>
<gene>
    <name type="primary">RANGAP1</name>
    <name type="synonym">KIAA1835</name>
    <name type="synonym">SD</name>
</gene>
<reference key="1">
    <citation type="journal article" date="1995" name="Proc. Natl. Acad. Sci. U.S.A.">
        <title>Human RanGTPase-activating protein RanGAP1 is a homologue of yeast Rna1p involved in mRNA processing and transport.</title>
        <authorList>
            <person name="Bischoff F.R."/>
            <person name="Krebber H."/>
            <person name="Kempf T."/>
            <person name="Hermes I."/>
            <person name="Ponstingl H."/>
        </authorList>
    </citation>
    <scope>NUCLEOTIDE SEQUENCE [MRNA]</scope>
    <scope>PARTIAL PROTEIN SEQUENCE</scope>
</reference>
<reference key="2">
    <citation type="journal article" date="2001" name="DNA Res.">
        <title>Prediction of the coding sequences of unidentified human genes. XX. The complete sequences of 100 new cDNA clones from brain which code for large proteins in vitro.</title>
        <authorList>
            <person name="Nagase T."/>
            <person name="Nakayama M."/>
            <person name="Nakajima D."/>
            <person name="Kikuno R."/>
            <person name="Ohara O."/>
        </authorList>
    </citation>
    <scope>NUCLEOTIDE SEQUENCE [LARGE SCALE MRNA]</scope>
    <source>
        <tissue>Brain</tissue>
    </source>
</reference>
<reference key="3">
    <citation type="journal article" date="2002" name="DNA Res.">
        <title>Construction of expression-ready cDNA clones for KIAA genes: manual curation of 330 KIAA cDNA clones.</title>
        <authorList>
            <person name="Nakajima D."/>
            <person name="Okazaki N."/>
            <person name="Yamakawa H."/>
            <person name="Kikuno R."/>
            <person name="Ohara O."/>
            <person name="Nagase T."/>
        </authorList>
    </citation>
    <scope>SEQUENCE REVISION</scope>
</reference>
<reference key="4">
    <citation type="journal article" date="2004" name="Genome Biol.">
        <title>A genome annotation-driven approach to cloning the human ORFeome.</title>
        <authorList>
            <person name="Collins J.E."/>
            <person name="Wright C.L."/>
            <person name="Edwards C.A."/>
            <person name="Davis M.P."/>
            <person name="Grinham J.A."/>
            <person name="Cole C.G."/>
            <person name="Goward M.E."/>
            <person name="Aguado B."/>
            <person name="Mallya M."/>
            <person name="Mokrab Y."/>
            <person name="Huckle E.J."/>
            <person name="Beare D.M."/>
            <person name="Dunham I."/>
        </authorList>
    </citation>
    <scope>NUCLEOTIDE SEQUENCE [LARGE SCALE MRNA]</scope>
</reference>
<reference key="5">
    <citation type="journal article" date="1999" name="Nature">
        <title>The DNA sequence of human chromosome 22.</title>
        <authorList>
            <person name="Dunham I."/>
            <person name="Hunt A.R."/>
            <person name="Collins J.E."/>
            <person name="Bruskiewich R."/>
            <person name="Beare D.M."/>
            <person name="Clamp M."/>
            <person name="Smink L.J."/>
            <person name="Ainscough R."/>
            <person name="Almeida J.P."/>
            <person name="Babbage A.K."/>
            <person name="Bagguley C."/>
            <person name="Bailey J."/>
            <person name="Barlow K.F."/>
            <person name="Bates K.N."/>
            <person name="Beasley O.P."/>
            <person name="Bird C.P."/>
            <person name="Blakey S.E."/>
            <person name="Bridgeman A.M."/>
            <person name="Buck D."/>
            <person name="Burgess J."/>
            <person name="Burrill W.D."/>
            <person name="Burton J."/>
            <person name="Carder C."/>
            <person name="Carter N.P."/>
            <person name="Chen Y."/>
            <person name="Clark G."/>
            <person name="Clegg S.M."/>
            <person name="Cobley V.E."/>
            <person name="Cole C.G."/>
            <person name="Collier R.E."/>
            <person name="Connor R."/>
            <person name="Conroy D."/>
            <person name="Corby N.R."/>
            <person name="Coville G.J."/>
            <person name="Cox A.V."/>
            <person name="Davis J."/>
            <person name="Dawson E."/>
            <person name="Dhami P.D."/>
            <person name="Dockree C."/>
            <person name="Dodsworth S.J."/>
            <person name="Durbin R.M."/>
            <person name="Ellington A.G."/>
            <person name="Evans K.L."/>
            <person name="Fey J.M."/>
            <person name="Fleming K."/>
            <person name="French L."/>
            <person name="Garner A.A."/>
            <person name="Gilbert J.G.R."/>
            <person name="Goward M.E."/>
            <person name="Grafham D.V."/>
            <person name="Griffiths M.N.D."/>
            <person name="Hall C."/>
            <person name="Hall R.E."/>
            <person name="Hall-Tamlyn G."/>
            <person name="Heathcott R.W."/>
            <person name="Ho S."/>
            <person name="Holmes S."/>
            <person name="Hunt S.E."/>
            <person name="Jones M.C."/>
            <person name="Kershaw J."/>
            <person name="Kimberley A.M."/>
            <person name="King A."/>
            <person name="Laird G.K."/>
            <person name="Langford C.F."/>
            <person name="Leversha M.A."/>
            <person name="Lloyd C."/>
            <person name="Lloyd D.M."/>
            <person name="Martyn I.D."/>
            <person name="Mashreghi-Mohammadi M."/>
            <person name="Matthews L.H."/>
            <person name="Mccann O.T."/>
            <person name="Mcclay J."/>
            <person name="Mclaren S."/>
            <person name="McMurray A.A."/>
            <person name="Milne S.A."/>
            <person name="Mortimore B.J."/>
            <person name="Odell C.N."/>
            <person name="Pavitt R."/>
            <person name="Pearce A.V."/>
            <person name="Pearson D."/>
            <person name="Phillimore B.J.C.T."/>
            <person name="Phillips S.H."/>
            <person name="Plumb R.W."/>
            <person name="Ramsay H."/>
            <person name="Ramsey Y."/>
            <person name="Rogers L."/>
            <person name="Ross M.T."/>
            <person name="Scott C.E."/>
            <person name="Sehra H.K."/>
            <person name="Skuce C.D."/>
            <person name="Smalley S."/>
            <person name="Smith M.L."/>
            <person name="Soderlund C."/>
            <person name="Spragon L."/>
            <person name="Steward C.A."/>
            <person name="Sulston J.E."/>
            <person name="Swann R.M."/>
            <person name="Vaudin M."/>
            <person name="Wall M."/>
            <person name="Wallis J.M."/>
            <person name="Whiteley M.N."/>
            <person name="Willey D.L."/>
            <person name="Williams L."/>
            <person name="Williams S.A."/>
            <person name="Williamson H."/>
            <person name="Wilmer T.E."/>
            <person name="Wilming L."/>
            <person name="Wright C.L."/>
            <person name="Hubbard T."/>
            <person name="Bentley D.R."/>
            <person name="Beck S."/>
            <person name="Rogers J."/>
            <person name="Shimizu N."/>
            <person name="Minoshima S."/>
            <person name="Kawasaki K."/>
            <person name="Sasaki T."/>
            <person name="Asakawa S."/>
            <person name="Kudoh J."/>
            <person name="Shintani A."/>
            <person name="Shibuya K."/>
            <person name="Yoshizaki Y."/>
            <person name="Aoki N."/>
            <person name="Mitsuyama S."/>
            <person name="Roe B.A."/>
            <person name="Chen F."/>
            <person name="Chu L."/>
            <person name="Crabtree J."/>
            <person name="Deschamps S."/>
            <person name="Do A."/>
            <person name="Do T."/>
            <person name="Dorman A."/>
            <person name="Fang F."/>
            <person name="Fu Y."/>
            <person name="Hu P."/>
            <person name="Hua A."/>
            <person name="Kenton S."/>
            <person name="Lai H."/>
            <person name="Lao H.I."/>
            <person name="Lewis J."/>
            <person name="Lewis S."/>
            <person name="Lin S.-P."/>
            <person name="Loh P."/>
            <person name="Malaj E."/>
            <person name="Nguyen T."/>
            <person name="Pan H."/>
            <person name="Phan S."/>
            <person name="Qi S."/>
            <person name="Qian Y."/>
            <person name="Ray L."/>
            <person name="Ren Q."/>
            <person name="Shaull S."/>
            <person name="Sloan D."/>
            <person name="Song L."/>
            <person name="Wang Q."/>
            <person name="Wang Y."/>
            <person name="Wang Z."/>
            <person name="White J."/>
            <person name="Willingham D."/>
            <person name="Wu H."/>
            <person name="Yao Z."/>
            <person name="Zhan M."/>
            <person name="Zhang G."/>
            <person name="Chissoe S."/>
            <person name="Murray J."/>
            <person name="Miller N."/>
            <person name="Minx P."/>
            <person name="Fulton R."/>
            <person name="Johnson D."/>
            <person name="Bemis G."/>
            <person name="Bentley D."/>
            <person name="Bradshaw H."/>
            <person name="Bourne S."/>
            <person name="Cordes M."/>
            <person name="Du Z."/>
            <person name="Fulton L."/>
            <person name="Goela D."/>
            <person name="Graves T."/>
            <person name="Hawkins J."/>
            <person name="Hinds K."/>
            <person name="Kemp K."/>
            <person name="Latreille P."/>
            <person name="Layman D."/>
            <person name="Ozersky P."/>
            <person name="Rohlfing T."/>
            <person name="Scheet P."/>
            <person name="Walker C."/>
            <person name="Wamsley A."/>
            <person name="Wohldmann P."/>
            <person name="Pepin K."/>
            <person name="Nelson J."/>
            <person name="Korf I."/>
            <person name="Bedell J.A."/>
            <person name="Hillier L.W."/>
            <person name="Mardis E."/>
            <person name="Waterston R."/>
            <person name="Wilson R."/>
            <person name="Emanuel B.S."/>
            <person name="Shaikh T."/>
            <person name="Kurahashi H."/>
            <person name="Saitta S."/>
            <person name="Budarf M.L."/>
            <person name="McDermid H.E."/>
            <person name="Johnson A."/>
            <person name="Wong A.C.C."/>
            <person name="Morrow B.E."/>
            <person name="Edelmann L."/>
            <person name="Kim U.J."/>
            <person name="Shizuya H."/>
            <person name="Simon M.I."/>
            <person name="Dumanski J.P."/>
            <person name="Peyrard M."/>
            <person name="Kedra D."/>
            <person name="Seroussi E."/>
            <person name="Fransson I."/>
            <person name="Tapia I."/>
            <person name="Bruder C.E."/>
            <person name="O'Brien K.P."/>
            <person name="Wilkinson P."/>
            <person name="Bodenteich A."/>
            <person name="Hartman K."/>
            <person name="Hu X."/>
            <person name="Khan A.S."/>
            <person name="Lane L."/>
            <person name="Tilahun Y."/>
            <person name="Wright H."/>
        </authorList>
    </citation>
    <scope>NUCLEOTIDE SEQUENCE [LARGE SCALE GENOMIC DNA]</scope>
</reference>
<reference key="6">
    <citation type="journal article" date="2004" name="Genome Res.">
        <title>The status, quality, and expansion of the NIH full-length cDNA project: the Mammalian Gene Collection (MGC).</title>
        <authorList>
            <consortium name="The MGC Project Team"/>
        </authorList>
    </citation>
    <scope>NUCLEOTIDE SEQUENCE [LARGE SCALE MRNA]</scope>
    <source>
        <tissue>Brain</tissue>
        <tissue>Kidney</tissue>
    </source>
</reference>
<reference key="7">
    <citation type="journal article" date="1994" name="Proc. Natl. Acad. Sci. U.S.A.">
        <title>RanGAP1 induces GTPase activity of nuclear Ras-related Ran.</title>
        <authorList>
            <person name="Bischoff F.R."/>
            <person name="Klebe C."/>
            <person name="Kretschmer J."/>
            <person name="Wittinghofer A."/>
            <person name="Ponstingl H."/>
        </authorList>
    </citation>
    <scope>FUNCTION</scope>
    <scope>SUBUNIT</scope>
    <scope>SUBCELLULAR LOCATION</scope>
</reference>
<reference key="8">
    <citation type="journal article" date="1995" name="Mol. Cell. Biol.">
        <title>Separate domains of the Ran GTPase interact with different factors to regulate nuclear protein import and RNA processing.</title>
        <authorList>
            <person name="Ren M."/>
            <person name="Villamarin A."/>
            <person name="Shih A."/>
            <person name="Coutavas E."/>
            <person name="Moore M.S."/>
            <person name="Locurcio M."/>
            <person name="Clarke V."/>
            <person name="Oppenheim J.D."/>
            <person name="D'Eustachio P."/>
            <person name="Rush M.G."/>
        </authorList>
    </citation>
    <scope>INTERACTION WITH RAN</scope>
</reference>
<reference key="9">
    <citation type="journal article" date="1996" name="Gene">
        <title>Ubiquitous expression and testis-specific alternative polyadenylation of mRNA for the human Ran GTPase activator RanGAP1.</title>
        <authorList>
            <person name="Krebber H."/>
            <person name="Ponstingl H."/>
        </authorList>
    </citation>
    <scope>TISSUE SPECIFICITY</scope>
</reference>
<reference key="10">
    <citation type="journal article" date="1996" name="EMBO J.">
        <title>Identification of different roles for RanGDP and RanGTP in nuclear protein import.</title>
        <authorList>
            <person name="Goerlich D."/>
            <person name="Pante N."/>
            <person name="Kutay U."/>
            <person name="Aebi U."/>
            <person name="Bischoff F.R."/>
        </authorList>
    </citation>
    <scope>INTERACTION WITH RAN</scope>
    <scope>FUNCTION</scope>
</reference>
<reference key="11">
    <citation type="journal article" date="2002" name="J. Cell Biol.">
        <title>SUMO-1 targets RanGAP1 to kinetochores and mitotic spindles.</title>
        <authorList>
            <person name="Joseph J."/>
            <person name="Tan S.-H."/>
            <person name="Karpova T.S."/>
            <person name="McNally J.G."/>
            <person name="Dasso M."/>
        </authorList>
    </citation>
    <scope>SUMOYLATION</scope>
    <scope>SUBCELLULAR LOCATION</scope>
    <scope>MUTAGENESIS OF LYS-524</scope>
</reference>
<reference key="12">
    <citation type="journal article" date="2004" name="J. Cell Biol.">
        <title>RanGAP1*SUMO1 is phosphorylated at the onset of mitosis and remains associated with RanBP2 upon NPC disassembly.</title>
        <authorList>
            <person name="Swaminathan S."/>
            <person name="Kiendl F."/>
            <person name="Koerner R."/>
            <person name="Lupetti R."/>
            <person name="Hengst L."/>
            <person name="Melchior F."/>
        </authorList>
    </citation>
    <scope>PHOSPHORYLATION AT THR-409; SER-428 AND SER-442</scope>
    <scope>IDENTIFICATION BY MASS SPECTROMETRY</scope>
    <scope>SUMOYLATION</scope>
    <scope>SUBCELLULAR LOCATION</scope>
    <scope>INTERACTION WITH SUMO1; RANBP2 AND UBE2I</scope>
</reference>
<reference key="13">
    <citation type="journal article" date="2004" name="Mol. Cell. Biol.">
        <title>RanBP2/Nup358 provides a major binding site for NXF1-p15 dimers at the nuclear pore complex and functions in nuclear mRNA export.</title>
        <authorList>
            <person name="Forler D."/>
            <person name="Rabut G."/>
            <person name="Ciccarelli F.D."/>
            <person name="Herold A."/>
            <person name="Koecher T."/>
            <person name="Niggeweg R."/>
            <person name="Bork P."/>
            <person name="Ellenberg J."/>
            <person name="Izaurralde E."/>
        </authorList>
    </citation>
    <scope>IDENTIFICATION IN A COMPLEX WITH RANBP2; NXF1 AND NXT1</scope>
</reference>
<reference key="14">
    <citation type="journal article" date="2005" name="Cell Struct. Funct.">
        <title>Phosphorylation of RanGAP1 stabilizes its interaction with Ran and RanBP1.</title>
        <authorList>
            <person name="Takeda E."/>
            <person name="Hieda M."/>
            <person name="Katahira J."/>
            <person name="Yoneda Y."/>
        </authorList>
    </citation>
    <scope>FUNCTION</scope>
    <scope>IDENTIFICATION IN A COMPLEX WITH RAN AND RANBP1</scope>
    <scope>PHOSPHORYLATION AT SER-358</scope>
    <scope>IDENTIFICATION BY MASS SPECTROMETRY</scope>
    <scope>SUMOYLATION</scope>
    <scope>MUTAGENESIS OF ARG-91; SER-356 AND SER-358</scope>
</reference>
<reference key="15">
    <citation type="journal article" date="2006" name="Cell">
        <title>Global, in vivo, and site-specific phosphorylation dynamics in signaling networks.</title>
        <authorList>
            <person name="Olsen J.V."/>
            <person name="Blagoev B."/>
            <person name="Gnad F."/>
            <person name="Macek B."/>
            <person name="Kumar C."/>
            <person name="Mortensen P."/>
            <person name="Mann M."/>
        </authorList>
    </citation>
    <scope>PHOSPHORYLATION [LARGE SCALE ANALYSIS] AT SER-442</scope>
    <scope>IDENTIFICATION BY MASS SPECTROMETRY [LARGE SCALE ANALYSIS]</scope>
    <source>
        <tissue>Cervix carcinoma</tissue>
    </source>
</reference>
<reference key="16">
    <citation type="journal article" date="2008" name="J. Biol. Chem.">
        <title>Nuclear tumor necrosis factor receptor-associated factor 6 in lymphoid cells negatively regulates c-Myb-mediated transactivation through small ubiquitin-related modifier-1 modification.</title>
        <authorList>
            <person name="Pham L.V."/>
            <person name="Zhou H.J."/>
            <person name="Lin-Lee Y.C."/>
            <person name="Tamayo A.T."/>
            <person name="Yoshimura L.C."/>
            <person name="Fu L."/>
            <person name="Darnay B.G."/>
            <person name="Ford R.J."/>
        </authorList>
    </citation>
    <scope>INTERACTION WITH TRAF6</scope>
</reference>
<reference key="17">
    <citation type="journal article" date="2008" name="Proc. Natl. Acad. Sci. U.S.A.">
        <title>A quantitative atlas of mitotic phosphorylation.</title>
        <authorList>
            <person name="Dephoure N."/>
            <person name="Zhou C."/>
            <person name="Villen J."/>
            <person name="Beausoleil S.A."/>
            <person name="Bakalarski C.E."/>
            <person name="Elledge S.J."/>
            <person name="Gygi S.P."/>
        </authorList>
    </citation>
    <scope>PHOSPHORYLATION [LARGE SCALE ANALYSIS] AT SER-358; SER-428 AND SER-442</scope>
    <scope>IDENTIFICATION BY MASS SPECTROMETRY [LARGE SCALE ANALYSIS]</scope>
    <source>
        <tissue>Cervix carcinoma</tissue>
    </source>
</reference>
<reference key="18">
    <citation type="journal article" date="2009" name="Anal. Chem.">
        <title>Lys-N and trypsin cover complementary parts of the phosphoproteome in a refined SCX-based approach.</title>
        <authorList>
            <person name="Gauci S."/>
            <person name="Helbig A.O."/>
            <person name="Slijper M."/>
            <person name="Krijgsveld J."/>
            <person name="Heck A.J."/>
            <person name="Mohammed S."/>
        </authorList>
    </citation>
    <scope>IDENTIFICATION BY MASS SPECTROMETRY [LARGE SCALE ANALYSIS]</scope>
</reference>
<reference key="19">
    <citation type="journal article" date="2009" name="Sci. Signal.">
        <title>Quantitative phosphoproteomic analysis of T cell receptor signaling reveals system-wide modulation of protein-protein interactions.</title>
        <authorList>
            <person name="Mayya V."/>
            <person name="Lundgren D.H."/>
            <person name="Hwang S.-I."/>
            <person name="Rezaul K."/>
            <person name="Wu L."/>
            <person name="Eng J.K."/>
            <person name="Rodionov V."/>
            <person name="Han D.K."/>
        </authorList>
    </citation>
    <scope>PHOSPHORYLATION [LARGE SCALE ANALYSIS] AT SER-428; SER-435; THR-436 AND SER-442</scope>
    <scope>IDENTIFICATION BY MASS SPECTROMETRY [LARGE SCALE ANALYSIS]</scope>
    <source>
        <tissue>Leukemic T-cell</tissue>
    </source>
</reference>
<reference key="20">
    <citation type="journal article" date="2009" name="Science">
        <title>Lysine acetylation targets protein complexes and co-regulates major cellular functions.</title>
        <authorList>
            <person name="Choudhary C."/>
            <person name="Kumar C."/>
            <person name="Gnad F."/>
            <person name="Nielsen M.L."/>
            <person name="Rehman M."/>
            <person name="Walther T.C."/>
            <person name="Olsen J.V."/>
            <person name="Mann M."/>
        </authorList>
    </citation>
    <scope>ACETYLATION [LARGE SCALE ANALYSIS] AT LYS-524</scope>
    <scope>IDENTIFICATION BY MASS SPECTROMETRY [LARGE SCALE ANALYSIS]</scope>
</reference>
<reference key="21">
    <citation type="journal article" date="2010" name="J. Biol. Chem.">
        <title>In vivo identification of sumoylation sites by a signature tag and cysteine-targeted affinity purification.</title>
        <authorList>
            <person name="Blomster H.A."/>
            <person name="Imanishi S.Y."/>
            <person name="Siimes J."/>
            <person name="Kastu J."/>
            <person name="Morrice N.A."/>
            <person name="Eriksson J.E."/>
            <person name="Sistonen L."/>
        </authorList>
    </citation>
    <scope>SUMOYLATION AT LYS-8 AND LYS-524</scope>
    <scope>ACETYLATION AT ALA-2</scope>
    <source>
        <tissue>Cervix carcinoma</tissue>
    </source>
</reference>
<reference key="22">
    <citation type="journal article" date="2010" name="Sci. Signal.">
        <title>Quantitative phosphoproteomics reveals widespread full phosphorylation site occupancy during mitosis.</title>
        <authorList>
            <person name="Olsen J.V."/>
            <person name="Vermeulen M."/>
            <person name="Santamaria A."/>
            <person name="Kumar C."/>
            <person name="Miller M.L."/>
            <person name="Jensen L.J."/>
            <person name="Gnad F."/>
            <person name="Cox J."/>
            <person name="Jensen T.S."/>
            <person name="Nigg E.A."/>
            <person name="Brunak S."/>
            <person name="Mann M."/>
        </authorList>
    </citation>
    <scope>PHOSPHORYLATION [LARGE SCALE ANALYSIS] AT SER-428 AND SER-442</scope>
    <scope>IDENTIFICATION BY MASS SPECTROMETRY [LARGE SCALE ANALYSIS]</scope>
    <source>
        <tissue>Cervix carcinoma</tissue>
    </source>
</reference>
<reference key="23">
    <citation type="journal article" date="2011" name="BMC Syst. Biol.">
        <title>Initial characterization of the human central proteome.</title>
        <authorList>
            <person name="Burkard T.R."/>
            <person name="Planyavsky M."/>
            <person name="Kaupe I."/>
            <person name="Breitwieser F.P."/>
            <person name="Buerckstuemmer T."/>
            <person name="Bennett K.L."/>
            <person name="Superti-Furga G."/>
            <person name="Colinge J."/>
        </authorList>
    </citation>
    <scope>IDENTIFICATION BY MASS SPECTROMETRY [LARGE SCALE ANALYSIS]</scope>
</reference>
<reference key="24">
    <citation type="journal article" date="2011" name="Sci. Signal.">
        <title>System-wide temporal characterization of the proteome and phosphoproteome of human embryonic stem cell differentiation.</title>
        <authorList>
            <person name="Rigbolt K.T."/>
            <person name="Prokhorova T.A."/>
            <person name="Akimov V."/>
            <person name="Henningsen J."/>
            <person name="Johansen P.T."/>
            <person name="Kratchmarova I."/>
            <person name="Kassem M."/>
            <person name="Mann M."/>
            <person name="Olsen J.V."/>
            <person name="Blagoev B."/>
        </authorList>
    </citation>
    <scope>PHOSPHORYLATION [LARGE SCALE ANALYSIS] AT SER-442</scope>
    <scope>IDENTIFICATION BY MASS SPECTROMETRY [LARGE SCALE ANALYSIS]</scope>
</reference>
<reference key="25">
    <citation type="journal article" date="2013" name="J. Proteome Res.">
        <title>Toward a comprehensive characterization of a human cancer cell phosphoproteome.</title>
        <authorList>
            <person name="Zhou H."/>
            <person name="Di Palma S."/>
            <person name="Preisinger C."/>
            <person name="Peng M."/>
            <person name="Polat A.N."/>
            <person name="Heck A.J."/>
            <person name="Mohammed S."/>
        </authorList>
    </citation>
    <scope>PHOSPHORYLATION [LARGE SCALE ANALYSIS] AT SER-24; SER-301 AND SER-442</scope>
    <scope>IDENTIFICATION BY MASS SPECTROMETRY [LARGE SCALE ANALYSIS]</scope>
    <source>
        <tissue>Erythroleukemia</tissue>
    </source>
</reference>
<reference key="26">
    <citation type="journal article" date="2014" name="Nat. Struct. Mol. Biol.">
        <title>Uncovering global SUMOylation signaling networks in a site-specific manner.</title>
        <authorList>
            <person name="Hendriks I.A."/>
            <person name="D'Souza R.C."/>
            <person name="Yang B."/>
            <person name="Verlaan-de Vries M."/>
            <person name="Mann M."/>
            <person name="Vertegaal A.C."/>
        </authorList>
    </citation>
    <scope>SUMOYLATION [LARGE SCALE ANALYSIS] AT LYS-524</scope>
    <scope>IDENTIFICATION BY MASS SPECTROMETRY [LARGE SCALE ANALYSIS]</scope>
</reference>
<reference key="27">
    <citation type="journal article" date="2014" name="Proc. Natl. Acad. Sci. U.S.A.">
        <title>Mapping of SUMO sites and analysis of SUMOylation changes induced by external stimuli.</title>
        <authorList>
            <person name="Impens F."/>
            <person name="Radoshevich L."/>
            <person name="Cossart P."/>
            <person name="Ribet D."/>
        </authorList>
    </citation>
    <scope>SUMOYLATION [LARGE SCALE ANALYSIS] AT LYS-524</scope>
    <scope>IDENTIFICATION BY MASS SPECTROMETRY [LARGE SCALE ANALYSIS]</scope>
</reference>
<reference key="28">
    <citation type="journal article" date="2015" name="Cell Rep.">
        <title>SUMO-2 orchestrates chromatin modifiers in response to DNA damage.</title>
        <authorList>
            <person name="Hendriks I.A."/>
            <person name="Treffers L.W."/>
            <person name="Verlaan-de Vries M."/>
            <person name="Olsen J.V."/>
            <person name="Vertegaal A.C."/>
        </authorList>
    </citation>
    <scope>SUMOYLATION [LARGE SCALE ANALYSIS] AT LYS-524</scope>
    <scope>IDENTIFICATION BY MASS SPECTROMETRY [LARGE SCALE ANALYSIS]</scope>
</reference>
<reference key="29">
    <citation type="journal article" date="2015" name="J. Biol. Chem.">
        <title>MYCBP2 is a guanosine exchange factor for Ran protein and determines its localization in neurons of dorsal root ganglia.</title>
        <authorList>
            <person name="Doerr A."/>
            <person name="Pierre S."/>
            <person name="Zhang D.D."/>
            <person name="Henke M."/>
            <person name="Holland S."/>
            <person name="Scholich K."/>
        </authorList>
    </citation>
    <scope>INTERACTION WITH MYCBP2</scope>
    <scope>SUMOYLATION</scope>
</reference>
<reference key="30">
    <citation type="journal article" date="2015" name="Mol. Cell. Proteomics">
        <title>System-wide analysis of SUMOylation dynamics in response to replication stress reveals novel small ubiquitin-like modified target proteins and acceptor lysines relevant for genome stability.</title>
        <authorList>
            <person name="Xiao Z."/>
            <person name="Chang J.G."/>
            <person name="Hendriks I.A."/>
            <person name="Sigurdsson J.O."/>
            <person name="Olsen J.V."/>
            <person name="Vertegaal A.C."/>
        </authorList>
    </citation>
    <scope>SUMOYLATION [LARGE SCALE ANALYSIS] AT LYS-524</scope>
    <scope>IDENTIFICATION BY MASS SPECTROMETRY [LARGE SCALE ANALYSIS]</scope>
</reference>
<reference key="31">
    <citation type="journal article" date="2016" name="Nat. Commun.">
        <title>The RanBP2/RanGAP1*SUMO1/Ubc9 SUMO E3 ligase is a disassembly machine for Crm1-dependent nuclear export complexes.</title>
        <authorList>
            <person name="Ritterhoff T."/>
            <person name="Das H."/>
            <person name="Hofhaus G."/>
            <person name="Schroeder R.R."/>
            <person name="Flotho A."/>
            <person name="Melchior F."/>
        </authorList>
    </citation>
    <scope>FUNCTION</scope>
    <scope>IDENTIFICATION IN A COMPLEX WITH XPO1; RAN; RANBP2; SUMO1 AND UBE2I</scope>
    <scope>SUMOYLATION</scope>
</reference>
<reference key="32">
    <citation type="journal article" date="2017" name="Nat. Struct. Mol. Biol.">
        <title>Site-specific mapping of the human SUMO proteome reveals co-modification with phosphorylation.</title>
        <authorList>
            <person name="Hendriks I.A."/>
            <person name="Lyon D."/>
            <person name="Young C."/>
            <person name="Jensen L.J."/>
            <person name="Vertegaal A.C."/>
            <person name="Nielsen M.L."/>
        </authorList>
    </citation>
    <scope>SUMOYLATION [LARGE SCALE ANALYSIS] AT LYS-8; LYS-15; LYS-279; LYS-452; LYS-524 AND LYS-586</scope>
    <scope>IDENTIFICATION BY MASS SPECTROMETRY [LARGE SCALE ANALYSIS]</scope>
</reference>
<reference evidence="21" key="33">
    <citation type="journal article" date="2005" name="Nature">
        <title>Insights into E3 ligase activity revealed by a SUMO-RanGAP1-Ubc9-Nup358 complex.</title>
        <authorList>
            <person name="Reverter D."/>
            <person name="Lima C.D."/>
        </authorList>
    </citation>
    <scope>X-RAY CRYSTALLOGRAPHY (3.01 ANGSTROMS) OF 418-587 IN COMPLEX WITH SUMO1; RANBP2 AND UBE2I</scope>
</reference>
<reference evidence="22" key="34">
    <citation type="journal article" date="2006" name="Nat. Struct. Mol. Biol.">
        <title>SUMO protease SENP1 induces isomerization of the scissile peptide bond.</title>
        <authorList>
            <person name="Shen L."/>
            <person name="Tatham M.H."/>
            <person name="Dong C."/>
            <person name="Zagorska A."/>
            <person name="Naismith J.H."/>
            <person name="Hay R.T."/>
        </authorList>
    </citation>
    <scope>X-RAY CRYSTALLOGRAPHY (2.77 ANGSTROMS) OF 432-587 IN COMPLEX WITH SUMO1 AND SENP1</scope>
</reference>
<reference evidence="23 24 25" key="35">
    <citation type="journal article" date="2012" name="J. Biol. Chem.">
        <title>Determinants of small ubiquitin-like modifier 1 (SUMO1) protein specificity, E3 ligase, and SUMO-RanGAP1 binding activities of nucleoporin RanBP2.</title>
        <authorList>
            <person name="Gareau J.R."/>
            <person name="Reverter D."/>
            <person name="Lima C.D."/>
        </authorList>
    </citation>
    <scope>X-RAY CRYSTALLOGRAPHY (2.29 ANGSTROMS) OF 419-587 IN COMPLEXES WITH RANBP2; SUMO1; SUMO2 AND UBE2I</scope>
</reference>
<proteinExistence type="evidence at protein level"/>
<protein>
    <recommendedName>
        <fullName>Ran GTPase-activating protein 1</fullName>
        <shortName>RanGAP1</shortName>
    </recommendedName>
</protein>
<feature type="initiator methionine" description="Removed" evidence="11">
    <location>
        <position position="1"/>
    </location>
</feature>
<feature type="chain" id="PRO_0000056737" description="Ran GTPase-activating protein 1">
    <location>
        <begin position="2"/>
        <end position="587"/>
    </location>
</feature>
<feature type="repeat" description="LRR 1">
    <location>
        <begin position="48"/>
        <end position="71"/>
    </location>
</feature>
<feature type="repeat" description="LRR 2">
    <location>
        <begin position="111"/>
        <end position="134"/>
    </location>
</feature>
<feature type="repeat" description="LRR 3">
    <location>
        <begin position="207"/>
        <end position="230"/>
    </location>
</feature>
<feature type="repeat" description="LRR 4">
    <location>
        <begin position="235"/>
        <end position="258"/>
    </location>
</feature>
<feature type="repeat" description="LRR 5">
    <location>
        <begin position="292"/>
        <end position="319"/>
    </location>
</feature>
<feature type="repeat" description="LRR 6">
    <location>
        <begin position="320"/>
        <end position="343"/>
    </location>
</feature>
<feature type="region of interest" description="Disordered" evidence="3">
    <location>
        <begin position="357"/>
        <end position="430"/>
    </location>
</feature>
<feature type="short sequence motif" description="SUMO conjugation">
    <location>
        <begin position="523"/>
        <end position="526"/>
    </location>
</feature>
<feature type="compositionally biased region" description="Acidic residues" evidence="3">
    <location>
        <begin position="358"/>
        <end position="397"/>
    </location>
</feature>
<feature type="compositionally biased region" description="Polar residues" evidence="3">
    <location>
        <begin position="400"/>
        <end position="410"/>
    </location>
</feature>
<feature type="site" description="Hydrophobic interaction with UBE2I" evidence="1">
    <location>
        <position position="562"/>
    </location>
</feature>
<feature type="site" description="Hydrophobic interaction with UBE2I" evidence="1">
    <location>
        <position position="565"/>
    </location>
</feature>
<feature type="modified residue" description="N-acetylalanine" evidence="11">
    <location>
        <position position="2"/>
    </location>
</feature>
<feature type="modified residue" description="Phosphoserine" evidence="32">
    <location>
        <position position="24"/>
    </location>
</feature>
<feature type="modified residue" description="Phosphoserine" evidence="32">
    <location>
        <position position="301"/>
    </location>
</feature>
<feature type="modified residue" description="Phosphoserine" evidence="8 27">
    <location>
        <position position="358"/>
    </location>
</feature>
<feature type="modified residue" description="Phosphothreonine; by CDK2" evidence="6">
    <location>
        <position position="409"/>
    </location>
</feature>
<feature type="modified residue" description="Phosphoserine" evidence="6 27 29 30">
    <location>
        <position position="428"/>
    </location>
</feature>
<feature type="modified residue" description="Phosphoserine" evidence="29">
    <location>
        <position position="435"/>
    </location>
</feature>
<feature type="modified residue" description="Phosphothreonine" evidence="29">
    <location>
        <position position="436"/>
    </location>
</feature>
<feature type="modified residue" description="Phosphoserine" evidence="6 26 27 29 30 31 32">
    <location>
        <position position="442"/>
    </location>
</feature>
<feature type="modified residue" description="N6-acetyllysine; alternate" evidence="28">
    <location>
        <position position="524"/>
    </location>
</feature>
<feature type="cross-link" description="Glycyl lysine isopeptide (Lys-Gly) (interchain with G-Cter in SUMO1); alternate">
    <location>
        <position position="8"/>
    </location>
</feature>
<feature type="cross-link" description="Glycyl lysine isopeptide (Lys-Gly) (interchain with G-Cter in SUMO2); alternate" evidence="37">
    <location>
        <position position="8"/>
    </location>
</feature>
<feature type="cross-link" description="Glycyl lysine isopeptide (Lys-Gly) (interchain with G-Cter in SUMO2)" evidence="37">
    <location>
        <position position="15"/>
    </location>
</feature>
<feature type="cross-link" description="Glycyl lysine isopeptide (Lys-Gly) (interchain with G-Cter in SUMO2)" evidence="37">
    <location>
        <position position="279"/>
    </location>
</feature>
<feature type="cross-link" description="Glycyl lysine isopeptide (Lys-Gly) (interchain with G-Cter in SUMO2)" evidence="37">
    <location>
        <position position="452"/>
    </location>
</feature>
<feature type="cross-link" description="Glycyl lysine isopeptide (Lys-Gly) (interchain with G-Cter in SUMO1); alternate" evidence="4 33">
    <location>
        <position position="524"/>
    </location>
</feature>
<feature type="cross-link" description="Glycyl lysine isopeptide (Lys-Gly) (interchain with G-Cter in SUMO2); alternate" evidence="33 34 35 36 37">
    <location>
        <position position="524"/>
    </location>
</feature>
<feature type="cross-link" description="Glycyl lysine isopeptide (Lys-Gly) (interchain with G-Cter in SUMO2)" evidence="37">
    <location>
        <position position="586"/>
    </location>
</feature>
<feature type="sequence variant" id="VAR_029240" description="In dbSNP:rs2229752.">
    <original>E</original>
    <variation>Q</variation>
    <location>
        <position position="133"/>
    </location>
</feature>
<feature type="mutagenesis site" description="Abolishes RAN GTPase activation." evidence="8">
    <original>R</original>
    <variation>A</variation>
    <location>
        <position position="91"/>
    </location>
</feature>
<feature type="mutagenesis site" description="No effect on phosphorylation." evidence="8">
    <original>S</original>
    <variation>A</variation>
    <location>
        <position position="356"/>
    </location>
</feature>
<feature type="mutagenesis site" description="Strongly decreased phosphorylation. No effect on sumoylation." evidence="8">
    <original>S</original>
    <variation>A</variation>
    <location>
        <position position="358"/>
    </location>
</feature>
<feature type="mutagenesis site" description="Loss of cross-link to SUMO1. Abolishes association with nuclear pores during interphase, and with mitotic spindles during mitosis." evidence="4">
    <original>K</original>
    <variation>R</variation>
    <location>
        <position position="524"/>
    </location>
</feature>
<feature type="helix" evidence="39">
    <location>
        <begin position="434"/>
        <end position="439"/>
    </location>
</feature>
<feature type="helix" evidence="39">
    <location>
        <begin position="443"/>
        <end position="448"/>
    </location>
</feature>
<feature type="helix" evidence="40">
    <location>
        <begin position="450"/>
        <end position="452"/>
    </location>
</feature>
<feature type="helix" evidence="39">
    <location>
        <begin position="453"/>
        <end position="459"/>
    </location>
</feature>
<feature type="helix" evidence="39">
    <location>
        <begin position="466"/>
        <end position="477"/>
    </location>
</feature>
<feature type="helix" evidence="39">
    <location>
        <begin position="484"/>
        <end position="502"/>
    </location>
</feature>
<feature type="strand" evidence="38">
    <location>
        <begin position="503"/>
        <end position="507"/>
    </location>
</feature>
<feature type="helix" evidence="39">
    <location>
        <begin position="509"/>
        <end position="519"/>
    </location>
</feature>
<feature type="strand" evidence="40">
    <location>
        <begin position="522"/>
        <end position="526"/>
    </location>
</feature>
<feature type="helix" evidence="39">
    <location>
        <begin position="536"/>
        <end position="545"/>
    </location>
</feature>
<feature type="strand" evidence="38">
    <location>
        <begin position="548"/>
        <end position="551"/>
    </location>
</feature>
<feature type="helix" evidence="39">
    <location>
        <begin position="553"/>
        <end position="555"/>
    </location>
</feature>
<feature type="helix" evidence="39">
    <location>
        <begin position="556"/>
        <end position="564"/>
    </location>
</feature>
<feature type="helix" evidence="39">
    <location>
        <begin position="568"/>
        <end position="571"/>
    </location>
</feature>
<feature type="helix" evidence="39">
    <location>
        <begin position="574"/>
        <end position="586"/>
    </location>
</feature>